<organism>
    <name type="scientific">Murine adenovirus A serotype 1</name>
    <name type="common">MAdV-1</name>
    <name type="synonym">Murine adenovirus 1</name>
    <dbReference type="NCBI Taxonomy" id="10530"/>
    <lineage>
        <taxon>Viruses</taxon>
        <taxon>Varidnaviria</taxon>
        <taxon>Bamfordvirae</taxon>
        <taxon>Preplasmiviricota</taxon>
        <taxon>Tectiliviricetes</taxon>
        <taxon>Rowavirales</taxon>
        <taxon>Adenoviridae</taxon>
        <taxon>Mastadenovirus</taxon>
        <taxon>Murine mastadenovirus A</taxon>
    </lineage>
</organism>
<gene>
    <name type="primary">PX</name>
</gene>
<reference key="1">
    <citation type="submission" date="1997-05" db="EMBL/GenBank/DDBJ databases">
        <authorList>
            <person name="Meissner J.D."/>
            <person name="Hirsch G.N."/>
            <person name="Larue E.A."/>
            <person name="Fulcher R.A."/>
            <person name="Spindler K.R."/>
        </authorList>
    </citation>
    <scope>NUCLEOTIDE SEQUENCE [GENOMIC DNA]</scope>
</reference>
<proteinExistence type="inferred from homology"/>
<keyword id="KW-0238">DNA-binding</keyword>
<keyword id="KW-0426">Late protein</keyword>
<keyword id="KW-0946">Virion</keyword>
<dbReference type="EMBL" id="U95843">
    <property type="protein sequence ID" value="AAB53758.1"/>
    <property type="molecule type" value="Genomic_DNA"/>
</dbReference>
<dbReference type="GO" id="GO:0019013">
    <property type="term" value="C:viral nucleocapsid"/>
    <property type="evidence" value="ECO:0007669"/>
    <property type="project" value="InterPro"/>
</dbReference>
<dbReference type="GO" id="GO:0003677">
    <property type="term" value="F:DNA binding"/>
    <property type="evidence" value="ECO:0007669"/>
    <property type="project" value="UniProtKB-KW"/>
</dbReference>
<dbReference type="InterPro" id="IPR008393">
    <property type="entry name" value="Adenovirus_late_L2_mu_core"/>
</dbReference>
<dbReference type="Pfam" id="PF05829">
    <property type="entry name" value="Adeno_PX"/>
    <property type="match status" value="1"/>
</dbReference>
<protein>
    <recommendedName>
        <fullName>Late L2 mu core protein</fullName>
    </recommendedName>
    <alternativeName>
        <fullName>Protein X</fullName>
        <shortName>pX</shortName>
    </alternativeName>
    <alternativeName>
        <fullName>pMu</fullName>
    </alternativeName>
</protein>
<feature type="propeptide" id="PRO_0000036540" evidence="2">
    <location>
        <begin position="1"/>
        <end position="27"/>
    </location>
</feature>
<feature type="peptide" id="PRO_0000036541" description="Late L2 mu core protein">
    <location>
        <begin position="28"/>
        <end position="43"/>
    </location>
</feature>
<feature type="propeptide" id="PRO_0000036542" evidence="2">
    <location>
        <begin position="44"/>
        <end position="74"/>
    </location>
</feature>
<feature type="site" description="Cleavage; by adenovirus protease" evidence="2">
    <location>
        <begin position="27"/>
        <end position="28"/>
    </location>
</feature>
<feature type="site" description="Cleavage; by adenovirus protease" evidence="2">
    <location>
        <begin position="43"/>
        <end position="44"/>
    </location>
</feature>
<comment type="function">
    <text evidence="1">The role of the precursor might be to condense the viral prochromatin for encapsidation by virtue of the two basic domains.</text>
</comment>
<comment type="subcellular location">
    <subcellularLocation>
        <location evidence="3">Virion</location>
    </subcellularLocation>
</comment>
<comment type="similarity">
    <text evidence="3">Belongs to the adenoviridae pX family.</text>
</comment>
<evidence type="ECO:0000250" key="1"/>
<evidence type="ECO:0000255" key="2"/>
<evidence type="ECO:0000305" key="3"/>
<name>L2MU_ADEM1</name>
<accession>O10443</accession>
<organismHost>
    <name type="scientific">Mus musculus</name>
    <name type="common">Mouse</name>
    <dbReference type="NCBI Taxonomy" id="10090"/>
</organismHost>
<sequence length="74" mass="8316">MPAYGLTYRFRFPVALRRRRRSRFSGGSLYARRRRRRVRVKGGFLPALIPLGAALISAIPGIASVAMQASQLKK</sequence>